<organism>
    <name type="scientific">Schizosaccharomyces pombe (strain 972 / ATCC 24843)</name>
    <name type="common">Fission yeast</name>
    <dbReference type="NCBI Taxonomy" id="284812"/>
    <lineage>
        <taxon>Eukaryota</taxon>
        <taxon>Fungi</taxon>
        <taxon>Dikarya</taxon>
        <taxon>Ascomycota</taxon>
        <taxon>Taphrinomycotina</taxon>
        <taxon>Schizosaccharomycetes</taxon>
        <taxon>Schizosaccharomycetales</taxon>
        <taxon>Schizosaccharomycetaceae</taxon>
        <taxon>Schizosaccharomyces</taxon>
    </lineage>
</organism>
<reference key="1">
    <citation type="journal article" date="2002" name="Nature">
        <title>The genome sequence of Schizosaccharomyces pombe.</title>
        <authorList>
            <person name="Wood V."/>
            <person name="Gwilliam R."/>
            <person name="Rajandream M.A."/>
            <person name="Lyne M.H."/>
            <person name="Lyne R."/>
            <person name="Stewart A."/>
            <person name="Sgouros J.G."/>
            <person name="Peat N."/>
            <person name="Hayles J."/>
            <person name="Baker S.G."/>
            <person name="Basham D."/>
            <person name="Bowman S."/>
            <person name="Brooks K."/>
            <person name="Brown D."/>
            <person name="Brown S."/>
            <person name="Chillingworth T."/>
            <person name="Churcher C.M."/>
            <person name="Collins M."/>
            <person name="Connor R."/>
            <person name="Cronin A."/>
            <person name="Davis P."/>
            <person name="Feltwell T."/>
            <person name="Fraser A."/>
            <person name="Gentles S."/>
            <person name="Goble A."/>
            <person name="Hamlin N."/>
            <person name="Harris D.E."/>
            <person name="Hidalgo J."/>
            <person name="Hodgson G."/>
            <person name="Holroyd S."/>
            <person name="Hornsby T."/>
            <person name="Howarth S."/>
            <person name="Huckle E.J."/>
            <person name="Hunt S."/>
            <person name="Jagels K."/>
            <person name="James K.D."/>
            <person name="Jones L."/>
            <person name="Jones M."/>
            <person name="Leather S."/>
            <person name="McDonald S."/>
            <person name="McLean J."/>
            <person name="Mooney P."/>
            <person name="Moule S."/>
            <person name="Mungall K.L."/>
            <person name="Murphy L.D."/>
            <person name="Niblett D."/>
            <person name="Odell C."/>
            <person name="Oliver K."/>
            <person name="O'Neil S."/>
            <person name="Pearson D."/>
            <person name="Quail M.A."/>
            <person name="Rabbinowitsch E."/>
            <person name="Rutherford K.M."/>
            <person name="Rutter S."/>
            <person name="Saunders D."/>
            <person name="Seeger K."/>
            <person name="Sharp S."/>
            <person name="Skelton J."/>
            <person name="Simmonds M.N."/>
            <person name="Squares R."/>
            <person name="Squares S."/>
            <person name="Stevens K."/>
            <person name="Taylor K."/>
            <person name="Taylor R.G."/>
            <person name="Tivey A."/>
            <person name="Walsh S.V."/>
            <person name="Warren T."/>
            <person name="Whitehead S."/>
            <person name="Woodward J.R."/>
            <person name="Volckaert G."/>
            <person name="Aert R."/>
            <person name="Robben J."/>
            <person name="Grymonprez B."/>
            <person name="Weltjens I."/>
            <person name="Vanstreels E."/>
            <person name="Rieger M."/>
            <person name="Schaefer M."/>
            <person name="Mueller-Auer S."/>
            <person name="Gabel C."/>
            <person name="Fuchs M."/>
            <person name="Duesterhoeft A."/>
            <person name="Fritzc C."/>
            <person name="Holzer E."/>
            <person name="Moestl D."/>
            <person name="Hilbert H."/>
            <person name="Borzym K."/>
            <person name="Langer I."/>
            <person name="Beck A."/>
            <person name="Lehrach H."/>
            <person name="Reinhardt R."/>
            <person name="Pohl T.M."/>
            <person name="Eger P."/>
            <person name="Zimmermann W."/>
            <person name="Wedler H."/>
            <person name="Wambutt R."/>
            <person name="Purnelle B."/>
            <person name="Goffeau A."/>
            <person name="Cadieu E."/>
            <person name="Dreano S."/>
            <person name="Gloux S."/>
            <person name="Lelaure V."/>
            <person name="Mottier S."/>
            <person name="Galibert F."/>
            <person name="Aves S.J."/>
            <person name="Xiang Z."/>
            <person name="Hunt C."/>
            <person name="Moore K."/>
            <person name="Hurst S.M."/>
            <person name="Lucas M."/>
            <person name="Rochet M."/>
            <person name="Gaillardin C."/>
            <person name="Tallada V.A."/>
            <person name="Garzon A."/>
            <person name="Thode G."/>
            <person name="Daga R.R."/>
            <person name="Cruzado L."/>
            <person name="Jimenez J."/>
            <person name="Sanchez M."/>
            <person name="del Rey F."/>
            <person name="Benito J."/>
            <person name="Dominguez A."/>
            <person name="Revuelta J.L."/>
            <person name="Moreno S."/>
            <person name="Armstrong J."/>
            <person name="Forsburg S.L."/>
            <person name="Cerutti L."/>
            <person name="Lowe T."/>
            <person name="McCombie W.R."/>
            <person name="Paulsen I."/>
            <person name="Potashkin J."/>
            <person name="Shpakovski G.V."/>
            <person name="Ussery D."/>
            <person name="Barrell B.G."/>
            <person name="Nurse P."/>
        </authorList>
    </citation>
    <scope>NUCLEOTIDE SEQUENCE [LARGE SCALE GENOMIC DNA]</scope>
    <source>
        <strain>972 / ATCC 24843</strain>
    </source>
</reference>
<reference key="2">
    <citation type="journal article" date="2006" name="Nat. Biotechnol.">
        <title>ORFeome cloning and global analysis of protein localization in the fission yeast Schizosaccharomyces pombe.</title>
        <authorList>
            <person name="Matsuyama A."/>
            <person name="Arai R."/>
            <person name="Yashiroda Y."/>
            <person name="Shirai A."/>
            <person name="Kamata A."/>
            <person name="Sekido S."/>
            <person name="Kobayashi Y."/>
            <person name="Hashimoto A."/>
            <person name="Hamamoto M."/>
            <person name="Hiraoka Y."/>
            <person name="Horinouchi S."/>
            <person name="Yoshida M."/>
        </authorList>
    </citation>
    <scope>SUBCELLULAR LOCATION [LARGE SCALE ANALYSIS]</scope>
</reference>
<reference key="3">
    <citation type="journal article" date="2012" name="Appl. Microbiol. Biotechnol.">
        <title>Characterization of triglyceride lipase genes of fission yeast Schizosaccharomyces pombe.</title>
        <authorList>
            <person name="Yazawa H."/>
            <person name="Kumagai H."/>
            <person name="Uemura H."/>
        </authorList>
    </citation>
    <scope>FUNCTION</scope>
</reference>
<protein>
    <recommendedName>
        <fullName>Triacylglycerol lipase ptl3</fullName>
        <ecNumber evidence="1">3.1.1.3</ecNumber>
    </recommendedName>
</protein>
<comment type="function">
    <text evidence="4">Lipid particle-localized triacylglycerol (TAG) lipase. The lipid droplet/particle is a lipid storage compartment which serves as a depot of energy and building blocks for membrane lipid biosynthesis. Involved in the mobilization of the non-polar storage lipids triacylglycerols (TAGs) from lipid particles by hydrolysis of TAGs, releasing and supplying specific fatty acids to the appropriate metabolic pathways.</text>
</comment>
<comment type="catalytic activity">
    <reaction evidence="1">
        <text>a triacylglycerol + H2O = a diacylglycerol + a fatty acid + H(+)</text>
        <dbReference type="Rhea" id="RHEA:12044"/>
        <dbReference type="ChEBI" id="CHEBI:15377"/>
        <dbReference type="ChEBI" id="CHEBI:15378"/>
        <dbReference type="ChEBI" id="CHEBI:17855"/>
        <dbReference type="ChEBI" id="CHEBI:18035"/>
        <dbReference type="ChEBI" id="CHEBI:28868"/>
        <dbReference type="EC" id="3.1.1.3"/>
    </reaction>
</comment>
<comment type="subcellular location">
    <subcellularLocation>
        <location evidence="3">Cytoplasm</location>
    </subcellularLocation>
    <subcellularLocation>
        <location evidence="1">Lipid droplet</location>
    </subcellularLocation>
</comment>
<evidence type="ECO:0000250" key="1">
    <source>
        <dbReference type="UniProtKB" id="Q12043"/>
    </source>
</evidence>
<evidence type="ECO:0000255" key="2">
    <source>
        <dbReference type="PROSITE-ProRule" id="PRU01161"/>
    </source>
</evidence>
<evidence type="ECO:0000269" key="3">
    <source>
    </source>
</evidence>
<evidence type="ECO:0000269" key="4">
    <source>
    </source>
</evidence>
<name>TGL5_SCHPO</name>
<keyword id="KW-0963">Cytoplasm</keyword>
<keyword id="KW-0378">Hydrolase</keyword>
<keyword id="KW-0442">Lipid degradation</keyword>
<keyword id="KW-0551">Lipid droplet</keyword>
<keyword id="KW-0443">Lipid metabolism</keyword>
<keyword id="KW-1185">Reference proteome</keyword>
<gene>
    <name type="primary">ptl3</name>
    <name type="ORF">SPAC1A6.05c</name>
</gene>
<feature type="chain" id="PRO_0000317235" description="Triacylglycerol lipase ptl3">
    <location>
        <begin position="1"/>
        <end position="483"/>
    </location>
</feature>
<feature type="domain" description="PNPLA" evidence="2">
    <location>
        <begin position="141"/>
        <end position="340"/>
    </location>
</feature>
<feature type="short sequence motif" description="GXGXXG" evidence="2">
    <location>
        <begin position="145"/>
        <end position="150"/>
    </location>
</feature>
<feature type="short sequence motif" description="GXSXG" evidence="2">
    <location>
        <begin position="172"/>
        <end position="176"/>
    </location>
</feature>
<feature type="active site" description="Nucleophile" evidence="2">
    <location>
        <position position="174"/>
    </location>
</feature>
<feature type="active site" description="Proton acceptor" evidence="2">
    <location>
        <position position="327"/>
    </location>
</feature>
<sequence>MSKNEIKLQMEYASSYETWLEAAEKLDVIEGKYQWREQKESDEYDYVLVESRLHELRRHRLSKNTRLLLGLLRNSVARDFANMDNSRLYNYAHSGTKKLIDEFIQEVLMCLTYLEETPDLSLDEKITEFSRLKLTTGNTALILSGGGTFGMTHIGVLQSLHEQGLVPKIICGSSAGAIVACAAAVRNKEEQEILLRQFHTGDLSVFTDPNAAPPSVIQSVKQYFTRGCVLDISHLERVMKLLIGDFTFQEAYDRSGYILNVTVSCGSLFEMPSLLNYITAPNVLVWSAVVATCSVPFLFKRATLWERDPLTREVSAFCVTDAPLWMDGSVDNDIPHAKLTELFHVNHFIVSQVNFHIVPFIMDPTSHNWVERCCKKAIDLAAQEVSLTFRLFAELGIFSVLFTKLQSVITQKYSGDITIIPRLNYREVNKVIKNPTPSFLLDAATRGKRGTWTKVPVTRNHCAIEILIAAAYTRLIKRSKSLK</sequence>
<dbReference type="EC" id="3.1.1.3" evidence="1"/>
<dbReference type="EMBL" id="CU329670">
    <property type="protein sequence ID" value="CAB16355.2"/>
    <property type="molecule type" value="Genomic_DNA"/>
</dbReference>
<dbReference type="PIR" id="T38008">
    <property type="entry name" value="T38008"/>
</dbReference>
<dbReference type="RefSeq" id="NP_593197.1">
    <property type="nucleotide sequence ID" value="NM_001018593.2"/>
</dbReference>
<dbReference type="BioGRID" id="278680">
    <property type="interactions" value="3"/>
</dbReference>
<dbReference type="FunCoup" id="Q9Y827">
    <property type="interactions" value="88"/>
</dbReference>
<dbReference type="STRING" id="284812.Q9Y827"/>
<dbReference type="PaxDb" id="4896-SPAC1A6.05c.1"/>
<dbReference type="EnsemblFungi" id="SPAC1A6.05c.1">
    <property type="protein sequence ID" value="SPAC1A6.05c.1:pep"/>
    <property type="gene ID" value="SPAC1A6.05c"/>
</dbReference>
<dbReference type="GeneID" id="2542205"/>
<dbReference type="KEGG" id="spo:2542205"/>
<dbReference type="PomBase" id="SPAC1A6.05c">
    <property type="gene designation" value="ptl3"/>
</dbReference>
<dbReference type="VEuPathDB" id="FungiDB:SPAC1A6.05c"/>
<dbReference type="eggNOG" id="KOG2214">
    <property type="taxonomic scope" value="Eukaryota"/>
</dbReference>
<dbReference type="HOGENOM" id="CLU_009031_5_1_1"/>
<dbReference type="InParanoid" id="Q9Y827"/>
<dbReference type="OMA" id="TRWILNI"/>
<dbReference type="PhylomeDB" id="Q9Y827"/>
<dbReference type="PRO" id="PR:Q9Y827"/>
<dbReference type="Proteomes" id="UP000002485">
    <property type="component" value="Chromosome I"/>
</dbReference>
<dbReference type="GO" id="GO:0005737">
    <property type="term" value="C:cytoplasm"/>
    <property type="evidence" value="ECO:0007005"/>
    <property type="project" value="PomBase"/>
</dbReference>
<dbReference type="GO" id="GO:0005811">
    <property type="term" value="C:lipid droplet"/>
    <property type="evidence" value="ECO:0000266"/>
    <property type="project" value="PomBase"/>
</dbReference>
<dbReference type="GO" id="GO:0004806">
    <property type="term" value="F:triacylglycerol lipase activity"/>
    <property type="evidence" value="ECO:0000315"/>
    <property type="project" value="PomBase"/>
</dbReference>
<dbReference type="GO" id="GO:0019433">
    <property type="term" value="P:triglyceride catabolic process"/>
    <property type="evidence" value="ECO:0000266"/>
    <property type="project" value="PomBase"/>
</dbReference>
<dbReference type="GO" id="GO:0006642">
    <property type="term" value="P:triglyceride mobilization"/>
    <property type="evidence" value="ECO:0000315"/>
    <property type="project" value="PomBase"/>
</dbReference>
<dbReference type="CDD" id="cd07230">
    <property type="entry name" value="Pat_TGL4-5_like"/>
    <property type="match status" value="1"/>
</dbReference>
<dbReference type="Gene3D" id="3.40.1090.10">
    <property type="entry name" value="Cytosolic phospholipase A2 catalytic domain"/>
    <property type="match status" value="2"/>
</dbReference>
<dbReference type="InterPro" id="IPR016035">
    <property type="entry name" value="Acyl_Trfase/lysoPLipase"/>
</dbReference>
<dbReference type="InterPro" id="IPR050301">
    <property type="entry name" value="NTE"/>
</dbReference>
<dbReference type="InterPro" id="IPR002641">
    <property type="entry name" value="PNPLA_dom"/>
</dbReference>
<dbReference type="InterPro" id="IPR021771">
    <property type="entry name" value="Triacylglycerol_lipase_N"/>
</dbReference>
<dbReference type="PANTHER" id="PTHR14226">
    <property type="entry name" value="NEUROPATHY TARGET ESTERASE/SWISS CHEESE D.MELANOGASTER"/>
    <property type="match status" value="1"/>
</dbReference>
<dbReference type="PANTHER" id="PTHR14226:SF10">
    <property type="entry name" value="TRIACYLGLYCEROL LIPASE 4-RELATED"/>
    <property type="match status" value="1"/>
</dbReference>
<dbReference type="Pfam" id="PF11815">
    <property type="entry name" value="DUF3336"/>
    <property type="match status" value="1"/>
</dbReference>
<dbReference type="Pfam" id="PF01734">
    <property type="entry name" value="Patatin"/>
    <property type="match status" value="1"/>
</dbReference>
<dbReference type="SUPFAM" id="SSF52151">
    <property type="entry name" value="FabD/lysophospholipase-like"/>
    <property type="match status" value="1"/>
</dbReference>
<dbReference type="PROSITE" id="PS51635">
    <property type="entry name" value="PNPLA"/>
    <property type="match status" value="1"/>
</dbReference>
<proteinExistence type="inferred from homology"/>
<accession>Q9Y827</accession>